<name>CAHH_RABPU</name>
<dbReference type="EMBL" id="AY484669">
    <property type="protein sequence ID" value="AAS49815.1"/>
    <property type="molecule type" value="Genomic_DNA"/>
</dbReference>
<dbReference type="SMR" id="Q6RZI9"/>
<dbReference type="Proteomes" id="UP000166173">
    <property type="component" value="Segment"/>
</dbReference>
<dbReference type="GO" id="GO:0016020">
    <property type="term" value="C:membrane"/>
    <property type="evidence" value="ECO:0007669"/>
    <property type="project" value="UniProtKB-KW"/>
</dbReference>
<dbReference type="GO" id="GO:0019031">
    <property type="term" value="C:viral envelope"/>
    <property type="evidence" value="ECO:0007669"/>
    <property type="project" value="UniProtKB-KW"/>
</dbReference>
<dbReference type="GO" id="GO:0055036">
    <property type="term" value="C:virion membrane"/>
    <property type="evidence" value="ECO:0007669"/>
    <property type="project" value="UniProtKB-SubCell"/>
</dbReference>
<dbReference type="GO" id="GO:0004089">
    <property type="term" value="F:carbonate dehydratase activity"/>
    <property type="evidence" value="ECO:0007669"/>
    <property type="project" value="InterPro"/>
</dbReference>
<dbReference type="GO" id="GO:0008270">
    <property type="term" value="F:zinc ion binding"/>
    <property type="evidence" value="ECO:0007669"/>
    <property type="project" value="InterPro"/>
</dbReference>
<dbReference type="GO" id="GO:0046718">
    <property type="term" value="P:symbiont entry into host cell"/>
    <property type="evidence" value="ECO:0007669"/>
    <property type="project" value="UniProtKB-KW"/>
</dbReference>
<dbReference type="GO" id="GO:0019062">
    <property type="term" value="P:virion attachment to host cell"/>
    <property type="evidence" value="ECO:0007669"/>
    <property type="project" value="UniProtKB-KW"/>
</dbReference>
<dbReference type="CDD" id="cd00326">
    <property type="entry name" value="alpha_CA"/>
    <property type="match status" value="1"/>
</dbReference>
<dbReference type="Gene3D" id="3.10.200.10">
    <property type="entry name" value="Alpha carbonic anhydrase"/>
    <property type="match status" value="1"/>
</dbReference>
<dbReference type="InterPro" id="IPR001148">
    <property type="entry name" value="CA_dom"/>
</dbReference>
<dbReference type="InterPro" id="IPR036398">
    <property type="entry name" value="CA_dom_sf"/>
</dbReference>
<dbReference type="InterPro" id="IPR023561">
    <property type="entry name" value="Carbonic_anhydrase_a-class"/>
</dbReference>
<dbReference type="PANTHER" id="PTHR18952">
    <property type="entry name" value="CARBONIC ANHYDRASE"/>
    <property type="match status" value="1"/>
</dbReference>
<dbReference type="PANTHER" id="PTHR18952:SF124">
    <property type="entry name" value="CARBONIC ANHYDRASE 7"/>
    <property type="match status" value="1"/>
</dbReference>
<dbReference type="Pfam" id="PF00194">
    <property type="entry name" value="Carb_anhydrase"/>
    <property type="match status" value="1"/>
</dbReference>
<dbReference type="SMART" id="SM01057">
    <property type="entry name" value="Carb_anhydrase"/>
    <property type="match status" value="1"/>
</dbReference>
<dbReference type="SUPFAM" id="SSF51069">
    <property type="entry name" value="Carbonic anhydrase"/>
    <property type="match status" value="1"/>
</dbReference>
<dbReference type="PROSITE" id="PS51144">
    <property type="entry name" value="ALPHA_CA_2"/>
    <property type="match status" value="1"/>
</dbReference>
<protein>
    <recommendedName>
        <fullName>Cell surface-binding protein OPG105</fullName>
    </recommendedName>
    <alternativeName>
        <fullName>Carbonic anhydrase homolog</fullName>
    </alternativeName>
</protein>
<accession>Q6RZI9</accession>
<sequence length="304" mass="35245">MPQQLSPINIETKKAISNARLKPLDIHYNESKPTTIQNTGKLVRINFKGGYISGGFLPNEYVLSSLHIYWGKEDDYGSNHLIDVYKYSGEINLVHWNKKKYSSYEEAKKHDDGLIIISIFLQVSDHKNVYFQKIVNQLDSIRSANTSAPFDSVFYLDNLLPSTLDYFTYLGTTINHSADAAWIIFPTPINIHSDQLSKFRTLLSSSNHDGKPHYITENYRNPYKLNDDTQVYYSGEIIRAATTSPARDNYFMRWLSDLRETCFSYYQKYIEGNKTFAIIAIVFVFILTAILFLMSRRYSREKQN</sequence>
<proteinExistence type="evidence at transcript level"/>
<organism>
    <name type="scientific">Rabbitpox virus (strain Utrecht)</name>
    <name type="common">RPV</name>
    <dbReference type="NCBI Taxonomy" id="45417"/>
    <lineage>
        <taxon>Viruses</taxon>
        <taxon>Varidnaviria</taxon>
        <taxon>Bamfordvirae</taxon>
        <taxon>Nucleocytoviricota</taxon>
        <taxon>Pokkesviricetes</taxon>
        <taxon>Chitovirales</taxon>
        <taxon>Poxviridae</taxon>
        <taxon>Chordopoxvirinae</taxon>
        <taxon>Orthopoxvirus</taxon>
        <taxon>Vaccinia virus</taxon>
    </lineage>
</organism>
<reference key="1">
    <citation type="journal article" date="2005" name="J. Gen. Virol.">
        <title>Complete coding sequences of the rabbitpox virus genome.</title>
        <authorList>
            <person name="Li G."/>
            <person name="Chen N."/>
            <person name="Roper R.L."/>
            <person name="Feng Z."/>
            <person name="Hunter A.L."/>
            <person name="Danila M."/>
            <person name="Lefkowitz E.J."/>
            <person name="Buller R.M.L."/>
            <person name="Upton C."/>
        </authorList>
    </citation>
    <scope>NUCLEOTIDE SEQUENCE [LARGE SCALE GENOMIC DNA]</scope>
</reference>
<feature type="chain" id="PRO_0000077447" description="Cell surface-binding protein OPG105">
    <location>
        <begin position="1"/>
        <end position="304"/>
    </location>
</feature>
<feature type="topological domain" description="Virion surface" evidence="3">
    <location>
        <begin position="1"/>
        <end position="275"/>
    </location>
</feature>
<feature type="transmembrane region" description="Helical" evidence="3">
    <location>
        <begin position="276"/>
        <end position="294"/>
    </location>
</feature>
<feature type="topological domain" description="Intravirion" evidence="3">
    <location>
        <begin position="295"/>
        <end position="304"/>
    </location>
</feature>
<feature type="domain" description="Alpha-carbonic anhydrase" evidence="4">
    <location>
        <begin position="1"/>
        <end position="235"/>
    </location>
</feature>
<feature type="disulfide bond" description="Interchain" evidence="1">
    <location>
        <position position="262"/>
    </location>
</feature>
<keyword id="KW-1015">Disulfide bond</keyword>
<keyword id="KW-0945">Host-virus interaction</keyword>
<keyword id="KW-0472">Membrane</keyword>
<keyword id="KW-0812">Transmembrane</keyword>
<keyword id="KW-1133">Transmembrane helix</keyword>
<keyword id="KW-1161">Viral attachment to host cell</keyword>
<keyword id="KW-0261">Viral envelope protein</keyword>
<keyword id="KW-0946">Virion</keyword>
<keyword id="KW-1160">Virus entry into host cell</keyword>
<evidence type="ECO:0000250" key="1"/>
<evidence type="ECO:0000250" key="2">
    <source>
        <dbReference type="UniProtKB" id="P04195"/>
    </source>
</evidence>
<evidence type="ECO:0000255" key="3"/>
<evidence type="ECO:0000255" key="4">
    <source>
        <dbReference type="PROSITE-ProRule" id="PRU01134"/>
    </source>
</evidence>
<evidence type="ECO:0000305" key="5"/>
<comment type="function">
    <text evidence="1">Binds to chondroitin sulfate on the cell surface to provide virion attachment to target cell.</text>
</comment>
<comment type="subunit">
    <text evidence="2">Homodimer; disulfide-linked.</text>
</comment>
<comment type="subcellular location">
    <subcellularLocation>
        <location evidence="2">Virion membrane</location>
    </subcellularLocation>
    <text evidence="2">Component of the mature virion (MV) membrane.</text>
</comment>
<comment type="induction">
    <text>Expressed in the late phase of the viral replicative cycle.</text>
</comment>
<comment type="PTM">
    <text evidence="2">Apparently non-glycosylated.</text>
</comment>
<comment type="similarity">
    <text evidence="5">Belongs to the alpha-carbonic anhydrase family.</text>
</comment>
<organismHost>
    <name type="scientific">Oryctolagus cuniculus</name>
    <name type="common">Rabbit</name>
    <dbReference type="NCBI Taxonomy" id="9986"/>
</organismHost>
<gene>
    <name type="primary">OPG105</name>
    <name type="ordered locus">RPXV102</name>
</gene>